<proteinExistence type="evidence at protein level"/>
<dbReference type="EMBL" id="L33457">
    <property type="protein sequence ID" value="AAA67370.1"/>
    <property type="molecule type" value="Genomic_DNA"/>
</dbReference>
<dbReference type="EMBL" id="U50904">
    <property type="protein sequence ID" value="AAA93483.2"/>
    <property type="molecule type" value="mRNA"/>
</dbReference>
<dbReference type="EMBL" id="AAFI02000079">
    <property type="protein sequence ID" value="EAL64734.1"/>
    <property type="molecule type" value="Genomic_DNA"/>
</dbReference>
<dbReference type="RefSeq" id="XP_638256.1">
    <property type="nucleotide sequence ID" value="XM_633164.1"/>
</dbReference>
<dbReference type="SMR" id="P54671"/>
<dbReference type="FunCoup" id="P54671">
    <property type="interactions" value="7"/>
</dbReference>
<dbReference type="STRING" id="44689.P54671"/>
<dbReference type="GlyGen" id="P54671">
    <property type="glycosylation" value="1 site"/>
</dbReference>
<dbReference type="PaxDb" id="44689-DDB0191459"/>
<dbReference type="EnsemblProtists" id="EAL64734">
    <property type="protein sequence ID" value="EAL64734"/>
    <property type="gene ID" value="DDB_G0285319"/>
</dbReference>
<dbReference type="GeneID" id="8625064"/>
<dbReference type="KEGG" id="ddi:DDB_G0285319"/>
<dbReference type="dictyBase" id="DDB_G0285319">
    <property type="gene designation" value="H1"/>
</dbReference>
<dbReference type="VEuPathDB" id="AmoebaDB:DDB_G0285319"/>
<dbReference type="eggNOG" id="ENOG502S79K">
    <property type="taxonomic scope" value="Eukaryota"/>
</dbReference>
<dbReference type="HOGENOM" id="CLU_052897_2_0_1"/>
<dbReference type="InParanoid" id="P54671"/>
<dbReference type="OMA" id="IKNHYKV"/>
<dbReference type="PRO" id="PR:P54671"/>
<dbReference type="Proteomes" id="UP000002195">
    <property type="component" value="Chromosome 4"/>
</dbReference>
<dbReference type="GO" id="GO:0031012">
    <property type="term" value="C:extracellular matrix"/>
    <property type="evidence" value="ECO:0007005"/>
    <property type="project" value="dictyBase"/>
</dbReference>
<dbReference type="GO" id="GO:0000786">
    <property type="term" value="C:nucleosome"/>
    <property type="evidence" value="ECO:0007669"/>
    <property type="project" value="InterPro"/>
</dbReference>
<dbReference type="GO" id="GO:0005634">
    <property type="term" value="C:nucleus"/>
    <property type="evidence" value="ECO:0000314"/>
    <property type="project" value="dictyBase"/>
</dbReference>
<dbReference type="GO" id="GO:0005516">
    <property type="term" value="F:calmodulin binding"/>
    <property type="evidence" value="ECO:0000304"/>
    <property type="project" value="dictyBase"/>
</dbReference>
<dbReference type="GO" id="GO:0003690">
    <property type="term" value="F:double-stranded DNA binding"/>
    <property type="evidence" value="ECO:0000318"/>
    <property type="project" value="GO_Central"/>
</dbReference>
<dbReference type="GO" id="GO:0031492">
    <property type="term" value="F:nucleosomal DNA binding"/>
    <property type="evidence" value="ECO:0000318"/>
    <property type="project" value="GO_Central"/>
</dbReference>
<dbReference type="GO" id="GO:0030527">
    <property type="term" value="F:structural constituent of chromatin"/>
    <property type="evidence" value="ECO:0007669"/>
    <property type="project" value="InterPro"/>
</dbReference>
<dbReference type="GO" id="GO:0030261">
    <property type="term" value="P:chromosome condensation"/>
    <property type="evidence" value="ECO:0000318"/>
    <property type="project" value="GO_Central"/>
</dbReference>
<dbReference type="GO" id="GO:0045910">
    <property type="term" value="P:negative regulation of DNA recombination"/>
    <property type="evidence" value="ECO:0000318"/>
    <property type="project" value="GO_Central"/>
</dbReference>
<dbReference type="GO" id="GO:0006334">
    <property type="term" value="P:nucleosome assembly"/>
    <property type="evidence" value="ECO:0007669"/>
    <property type="project" value="InterPro"/>
</dbReference>
<dbReference type="CDD" id="cd00073">
    <property type="entry name" value="H15"/>
    <property type="match status" value="1"/>
</dbReference>
<dbReference type="FunFam" id="1.10.10.10:FF:000493">
    <property type="entry name" value="HMG-Y-related protein A"/>
    <property type="match status" value="1"/>
</dbReference>
<dbReference type="Gene3D" id="1.10.10.10">
    <property type="entry name" value="Winged helix-like DNA-binding domain superfamily/Winged helix DNA-binding domain"/>
    <property type="match status" value="1"/>
</dbReference>
<dbReference type="InterPro" id="IPR005819">
    <property type="entry name" value="H1/H5"/>
</dbReference>
<dbReference type="InterPro" id="IPR005818">
    <property type="entry name" value="Histone_H1/H5_H15"/>
</dbReference>
<dbReference type="InterPro" id="IPR036388">
    <property type="entry name" value="WH-like_DNA-bd_sf"/>
</dbReference>
<dbReference type="InterPro" id="IPR036390">
    <property type="entry name" value="WH_DNA-bd_sf"/>
</dbReference>
<dbReference type="PANTHER" id="PTHR11467:SF36">
    <property type="entry name" value="HISTONE 24-RELATED"/>
    <property type="match status" value="1"/>
</dbReference>
<dbReference type="PANTHER" id="PTHR11467">
    <property type="entry name" value="HISTONE H1"/>
    <property type="match status" value="1"/>
</dbReference>
<dbReference type="Pfam" id="PF00538">
    <property type="entry name" value="Linker_histone"/>
    <property type="match status" value="1"/>
</dbReference>
<dbReference type="PRINTS" id="PR00624">
    <property type="entry name" value="HISTONEH5"/>
</dbReference>
<dbReference type="SMART" id="SM00526">
    <property type="entry name" value="H15"/>
    <property type="match status" value="1"/>
</dbReference>
<dbReference type="SUPFAM" id="SSF46785">
    <property type="entry name" value="Winged helix' DNA-binding domain"/>
    <property type="match status" value="1"/>
</dbReference>
<dbReference type="PROSITE" id="PS51504">
    <property type="entry name" value="H15"/>
    <property type="match status" value="1"/>
</dbReference>
<comment type="function">
    <text>Histones H1 are necessary for the condensation of nucleosome chains into higher-order structures.</text>
</comment>
<comment type="function">
    <text>Binds calmodulin.</text>
</comment>
<comment type="subcellular location">
    <subcellularLocation>
        <location>Nucleus</location>
    </subcellularLocation>
    <subcellularLocation>
        <location>Chromosome</location>
    </subcellularLocation>
</comment>
<comment type="PTM">
    <text>Phosphorylated by H1 histone kinase (HKG).</text>
</comment>
<comment type="similarity">
    <text evidence="1">Belongs to the histone H1/H5 family.</text>
</comment>
<feature type="initiator methionine" description="Removed" evidence="3">
    <location>
        <position position="1"/>
    </location>
</feature>
<feature type="chain" id="PRO_0000195988" description="Histone H1">
    <location>
        <begin position="2"/>
        <end position="180"/>
    </location>
</feature>
<feature type="domain" description="H15" evidence="1">
    <location>
        <begin position="23"/>
        <end position="92"/>
    </location>
</feature>
<feature type="region of interest" description="Disordered" evidence="2">
    <location>
        <begin position="1"/>
        <end position="25"/>
    </location>
</feature>
<feature type="region of interest" description="Disordered" evidence="2">
    <location>
        <begin position="91"/>
        <end position="180"/>
    </location>
</feature>
<feature type="compositionally biased region" description="Low complexity" evidence="2">
    <location>
        <begin position="1"/>
        <end position="17"/>
    </location>
</feature>
<feature type="compositionally biased region" description="Low complexity" evidence="2">
    <location>
        <begin position="112"/>
        <end position="131"/>
    </location>
</feature>
<feature type="compositionally biased region" description="Low complexity" evidence="2">
    <location>
        <begin position="139"/>
        <end position="161"/>
    </location>
</feature>
<feature type="compositionally biased region" description="Basic residues" evidence="2">
    <location>
        <begin position="162"/>
        <end position="180"/>
    </location>
</feature>
<organism>
    <name type="scientific">Dictyostelium discoideum</name>
    <name type="common">Social amoeba</name>
    <dbReference type="NCBI Taxonomy" id="44689"/>
    <lineage>
        <taxon>Eukaryota</taxon>
        <taxon>Amoebozoa</taxon>
        <taxon>Evosea</taxon>
        <taxon>Eumycetozoa</taxon>
        <taxon>Dictyostelia</taxon>
        <taxon>Dictyosteliales</taxon>
        <taxon>Dictyosteliaceae</taxon>
        <taxon>Dictyostelium</taxon>
    </lineage>
</organism>
<accession>P54671</accession>
<accession>Q54NC4</accession>
<name>H1_DICDI</name>
<protein>
    <recommendedName>
        <fullName>Histone H1</fullName>
    </recommendedName>
</protein>
<gene>
    <name type="primary">H1</name>
    <name type="synonym">hstA</name>
    <name type="ORF">DDB_G0285319</name>
</gene>
<sequence length="180" mass="18860">MGPKAPTTPTKKAAATKSKPKPNHPTYQVMISTAIAHYKDRTGSSQPAIIKYIEANYNVAPDTFKTQLKLALKRLVAKGTLTMVKASYKLSEEGKKEHQATLGPVAKKPKAKTTATSTETTAAPPATPTKKAAPKKPAAKAASTSTKTAAAKKNSAKVTKAVSKKPAAKKAPSKKVAAKK</sequence>
<keyword id="KW-0112">Calmodulin-binding</keyword>
<keyword id="KW-0158">Chromosome</keyword>
<keyword id="KW-0903">Direct protein sequencing</keyword>
<keyword id="KW-0238">DNA-binding</keyword>
<keyword id="KW-0539">Nucleus</keyword>
<keyword id="KW-0597">Phosphoprotein</keyword>
<keyword id="KW-1185">Reference proteome</keyword>
<evidence type="ECO:0000255" key="1">
    <source>
        <dbReference type="PROSITE-ProRule" id="PRU00837"/>
    </source>
</evidence>
<evidence type="ECO:0000256" key="2">
    <source>
        <dbReference type="SAM" id="MobiDB-lite"/>
    </source>
</evidence>
<evidence type="ECO:0000269" key="3">
    <source>
    </source>
</evidence>
<reference key="1">
    <citation type="journal article" date="1995" name="Gene">
        <title>Dictyostelium discoideum contains a single-copy gene encoding a unique subtype of histone H1.</title>
        <authorList>
            <person name="Hauser L.J."/>
            <person name="Dhar M.S."/>
            <person name="Olins D.E."/>
        </authorList>
    </citation>
    <scope>NUCLEOTIDE SEQUENCE [GENOMIC DNA]</scope>
    <scope>PROTEIN SEQUENCE OF 2-17</scope>
</reference>
<reference key="2">
    <citation type="submission" date="2002-05" db="EMBL/GenBank/DDBJ databases">
        <title>Multicellular dictyostelium histone H1 is a calmodulin-binding protein.</title>
        <authorList>
            <person name="O'Day D.H."/>
            <person name="Mackay L."/>
            <person name="Lydan M.A."/>
        </authorList>
    </citation>
    <scope>NUCLEOTIDE SEQUENCE [MRNA]</scope>
    <source>
        <strain>JH10</strain>
    </source>
</reference>
<reference key="3">
    <citation type="journal article" date="2005" name="Nature">
        <title>The genome of the social amoeba Dictyostelium discoideum.</title>
        <authorList>
            <person name="Eichinger L."/>
            <person name="Pachebat J.A."/>
            <person name="Gloeckner G."/>
            <person name="Rajandream M.A."/>
            <person name="Sucgang R."/>
            <person name="Berriman M."/>
            <person name="Song J."/>
            <person name="Olsen R."/>
            <person name="Szafranski K."/>
            <person name="Xu Q."/>
            <person name="Tunggal B."/>
            <person name="Kummerfeld S."/>
            <person name="Madera M."/>
            <person name="Konfortov B.A."/>
            <person name="Rivero F."/>
            <person name="Bankier A.T."/>
            <person name="Lehmann R."/>
            <person name="Hamlin N."/>
            <person name="Davies R."/>
            <person name="Gaudet P."/>
            <person name="Fey P."/>
            <person name="Pilcher K."/>
            <person name="Chen G."/>
            <person name="Saunders D."/>
            <person name="Sodergren E.J."/>
            <person name="Davis P."/>
            <person name="Kerhornou A."/>
            <person name="Nie X."/>
            <person name="Hall N."/>
            <person name="Anjard C."/>
            <person name="Hemphill L."/>
            <person name="Bason N."/>
            <person name="Farbrother P."/>
            <person name="Desany B."/>
            <person name="Just E."/>
            <person name="Morio T."/>
            <person name="Rost R."/>
            <person name="Churcher C.M."/>
            <person name="Cooper J."/>
            <person name="Haydock S."/>
            <person name="van Driessche N."/>
            <person name="Cronin A."/>
            <person name="Goodhead I."/>
            <person name="Muzny D.M."/>
            <person name="Mourier T."/>
            <person name="Pain A."/>
            <person name="Lu M."/>
            <person name="Harper D."/>
            <person name="Lindsay R."/>
            <person name="Hauser H."/>
            <person name="James K.D."/>
            <person name="Quiles M."/>
            <person name="Madan Babu M."/>
            <person name="Saito T."/>
            <person name="Buchrieser C."/>
            <person name="Wardroper A."/>
            <person name="Felder M."/>
            <person name="Thangavelu M."/>
            <person name="Johnson D."/>
            <person name="Knights A."/>
            <person name="Loulseged H."/>
            <person name="Mungall K.L."/>
            <person name="Oliver K."/>
            <person name="Price C."/>
            <person name="Quail M.A."/>
            <person name="Urushihara H."/>
            <person name="Hernandez J."/>
            <person name="Rabbinowitsch E."/>
            <person name="Steffen D."/>
            <person name="Sanders M."/>
            <person name="Ma J."/>
            <person name="Kohara Y."/>
            <person name="Sharp S."/>
            <person name="Simmonds M.N."/>
            <person name="Spiegler S."/>
            <person name="Tivey A."/>
            <person name="Sugano S."/>
            <person name="White B."/>
            <person name="Walker D."/>
            <person name="Woodward J.R."/>
            <person name="Winckler T."/>
            <person name="Tanaka Y."/>
            <person name="Shaulsky G."/>
            <person name="Schleicher M."/>
            <person name="Weinstock G.M."/>
            <person name="Rosenthal A."/>
            <person name="Cox E.C."/>
            <person name="Chisholm R.L."/>
            <person name="Gibbs R.A."/>
            <person name="Loomis W.F."/>
            <person name="Platzer M."/>
            <person name="Kay R.R."/>
            <person name="Williams J.G."/>
            <person name="Dear P.H."/>
            <person name="Noegel A.A."/>
            <person name="Barrell B.G."/>
            <person name="Kuspa A."/>
        </authorList>
    </citation>
    <scope>NUCLEOTIDE SEQUENCE [LARGE SCALE GENOMIC DNA]</scope>
    <source>
        <strain>AX4</strain>
    </source>
</reference>